<organism>
    <name type="scientific">Buchnera aphidicola subsp. Acyrthosiphon pisum (strain Tuc7)</name>
    <dbReference type="NCBI Taxonomy" id="561501"/>
    <lineage>
        <taxon>Bacteria</taxon>
        <taxon>Pseudomonadati</taxon>
        <taxon>Pseudomonadota</taxon>
        <taxon>Gammaproteobacteria</taxon>
        <taxon>Enterobacterales</taxon>
        <taxon>Erwiniaceae</taxon>
        <taxon>Buchnera</taxon>
    </lineage>
</organism>
<feature type="chain" id="PRO_1000195910" description="Large ribosomal subunit protein bL28">
    <location>
        <begin position="1"/>
        <end position="75"/>
    </location>
</feature>
<accession>B8D6Z4</accession>
<gene>
    <name evidence="1" type="primary">rpmB</name>
    <name type="ordered locus">BUAPTUC7_086</name>
</gene>
<sequence>MSRICQITGKKRMIGNNRSHALNATKRKFLINIQYHRFWIADEKRFIKLRVSTNGMRYIDKKGIETVIRKINMKK</sequence>
<keyword id="KW-0687">Ribonucleoprotein</keyword>
<keyword id="KW-0689">Ribosomal protein</keyword>
<reference key="1">
    <citation type="journal article" date="2009" name="Science">
        <title>The dynamics and time scale of ongoing genomic erosion in symbiotic bacteria.</title>
        <authorList>
            <person name="Moran N.A."/>
            <person name="McLaughlin H.J."/>
            <person name="Sorek R."/>
        </authorList>
    </citation>
    <scope>NUCLEOTIDE SEQUENCE [LARGE SCALE GENOMIC DNA]</scope>
    <source>
        <strain>Tuc7</strain>
    </source>
</reference>
<comment type="similarity">
    <text evidence="1">Belongs to the bacterial ribosomal protein bL28 family.</text>
</comment>
<protein>
    <recommendedName>
        <fullName evidence="1">Large ribosomal subunit protein bL28</fullName>
    </recommendedName>
    <alternativeName>
        <fullName evidence="2">50S ribosomal protein L28</fullName>
    </alternativeName>
</protein>
<dbReference type="EMBL" id="CP001158">
    <property type="protein sequence ID" value="ACL29909.1"/>
    <property type="molecule type" value="Genomic_DNA"/>
</dbReference>
<dbReference type="RefSeq" id="WP_009874039.1">
    <property type="nucleotide sequence ID" value="NC_011834.1"/>
</dbReference>
<dbReference type="SMR" id="B8D6Z4"/>
<dbReference type="KEGG" id="bau:BUAPTUC7_086"/>
<dbReference type="HOGENOM" id="CLU_064548_3_1_6"/>
<dbReference type="GO" id="GO:0022625">
    <property type="term" value="C:cytosolic large ribosomal subunit"/>
    <property type="evidence" value="ECO:0007669"/>
    <property type="project" value="TreeGrafter"/>
</dbReference>
<dbReference type="GO" id="GO:0003735">
    <property type="term" value="F:structural constituent of ribosome"/>
    <property type="evidence" value="ECO:0007669"/>
    <property type="project" value="InterPro"/>
</dbReference>
<dbReference type="GO" id="GO:0006412">
    <property type="term" value="P:translation"/>
    <property type="evidence" value="ECO:0007669"/>
    <property type="project" value="UniProtKB-UniRule"/>
</dbReference>
<dbReference type="FunFam" id="2.30.170.40:FF:000001">
    <property type="entry name" value="50S ribosomal protein L28"/>
    <property type="match status" value="1"/>
</dbReference>
<dbReference type="Gene3D" id="2.30.170.40">
    <property type="entry name" value="Ribosomal protein L28/L24"/>
    <property type="match status" value="1"/>
</dbReference>
<dbReference type="HAMAP" id="MF_00373">
    <property type="entry name" value="Ribosomal_bL28"/>
    <property type="match status" value="1"/>
</dbReference>
<dbReference type="InterPro" id="IPR026569">
    <property type="entry name" value="Ribosomal_bL28"/>
</dbReference>
<dbReference type="InterPro" id="IPR034704">
    <property type="entry name" value="Ribosomal_bL28/bL31-like_sf"/>
</dbReference>
<dbReference type="InterPro" id="IPR001383">
    <property type="entry name" value="Ribosomal_bL28_bact-type"/>
</dbReference>
<dbReference type="InterPro" id="IPR037147">
    <property type="entry name" value="Ribosomal_bL28_sf"/>
</dbReference>
<dbReference type="NCBIfam" id="TIGR00009">
    <property type="entry name" value="L28"/>
    <property type="match status" value="1"/>
</dbReference>
<dbReference type="PANTHER" id="PTHR13528">
    <property type="entry name" value="39S RIBOSOMAL PROTEIN L28, MITOCHONDRIAL"/>
    <property type="match status" value="1"/>
</dbReference>
<dbReference type="PANTHER" id="PTHR13528:SF2">
    <property type="entry name" value="LARGE RIBOSOMAL SUBUNIT PROTEIN BL28M"/>
    <property type="match status" value="1"/>
</dbReference>
<dbReference type="Pfam" id="PF00830">
    <property type="entry name" value="Ribosomal_L28"/>
    <property type="match status" value="1"/>
</dbReference>
<dbReference type="SUPFAM" id="SSF143800">
    <property type="entry name" value="L28p-like"/>
    <property type="match status" value="1"/>
</dbReference>
<proteinExistence type="inferred from homology"/>
<evidence type="ECO:0000255" key="1">
    <source>
        <dbReference type="HAMAP-Rule" id="MF_00373"/>
    </source>
</evidence>
<evidence type="ECO:0000305" key="2"/>
<name>RL28_BUCAT</name>